<gene>
    <name type="primary">Ccdc6</name>
</gene>
<reference key="1">
    <citation type="journal article" date="2009" name="PLoS Biol.">
        <title>Lineage-specific biology revealed by a finished genome assembly of the mouse.</title>
        <authorList>
            <person name="Church D.M."/>
            <person name="Goodstadt L."/>
            <person name="Hillier L.W."/>
            <person name="Zody M.C."/>
            <person name="Goldstein S."/>
            <person name="She X."/>
            <person name="Bult C.J."/>
            <person name="Agarwala R."/>
            <person name="Cherry J.L."/>
            <person name="DiCuccio M."/>
            <person name="Hlavina W."/>
            <person name="Kapustin Y."/>
            <person name="Meric P."/>
            <person name="Maglott D."/>
            <person name="Birtle Z."/>
            <person name="Marques A.C."/>
            <person name="Graves T."/>
            <person name="Zhou S."/>
            <person name="Teague B."/>
            <person name="Potamousis K."/>
            <person name="Churas C."/>
            <person name="Place M."/>
            <person name="Herschleb J."/>
            <person name="Runnheim R."/>
            <person name="Forrest D."/>
            <person name="Amos-Landgraf J."/>
            <person name="Schwartz D.C."/>
            <person name="Cheng Z."/>
            <person name="Lindblad-Toh K."/>
            <person name="Eichler E.E."/>
            <person name="Ponting C.P."/>
        </authorList>
    </citation>
    <scope>NUCLEOTIDE SEQUENCE [LARGE SCALE GENOMIC DNA]</scope>
    <source>
        <strain>C57BL/6J</strain>
    </source>
</reference>
<reference key="2">
    <citation type="submission" date="2005-09" db="EMBL/GenBank/DDBJ databases">
        <authorList>
            <person name="Mural R.J."/>
            <person name="Adams M.D."/>
            <person name="Myers E.W."/>
            <person name="Smith H.O."/>
            <person name="Venter J.C."/>
        </authorList>
    </citation>
    <scope>NUCLEOTIDE SEQUENCE [LARGE SCALE GENOMIC DNA]</scope>
</reference>
<reference key="3">
    <citation type="journal article" date="2007" name="Proc. Natl. Acad. Sci. U.S.A.">
        <title>Large-scale phosphorylation analysis of mouse liver.</title>
        <authorList>
            <person name="Villen J."/>
            <person name="Beausoleil S.A."/>
            <person name="Gerber S.A."/>
            <person name="Gygi S.P."/>
        </authorList>
    </citation>
    <scope>PHOSPHORYLATION [LARGE SCALE ANALYSIS] AT SER-233 AND SER-237</scope>
    <scope>IDENTIFICATION BY MASS SPECTROMETRY [LARGE SCALE ANALYSIS]</scope>
    <source>
        <tissue>Liver</tissue>
    </source>
</reference>
<reference key="4">
    <citation type="journal article" date="2010" name="Cell">
        <title>A tissue-specific atlas of mouse protein phosphorylation and expression.</title>
        <authorList>
            <person name="Huttlin E.L."/>
            <person name="Jedrychowski M.P."/>
            <person name="Elias J.E."/>
            <person name="Goswami T."/>
            <person name="Rad R."/>
            <person name="Beausoleil S.A."/>
            <person name="Villen J."/>
            <person name="Haas W."/>
            <person name="Sowa M.E."/>
            <person name="Gygi S.P."/>
        </authorList>
    </citation>
    <scope>PHOSPHORYLATION [LARGE SCALE ANALYSIS] AT SER-45; SER-233; SER-237 AND SER-316</scope>
    <scope>IDENTIFICATION BY MASS SPECTROMETRY [LARGE SCALE ANALYSIS]</scope>
    <source>
        <tissue>Brain</tissue>
        <tissue>Brown adipose tissue</tissue>
        <tissue>Heart</tissue>
        <tissue>Kidney</tissue>
        <tissue>Liver</tissue>
        <tissue>Lung</tissue>
        <tissue>Pancreas</tissue>
        <tissue>Spleen</tissue>
        <tissue>Testis</tissue>
    </source>
</reference>
<reference key="5">
    <citation type="journal article" date="2014" name="Mol. Cell. Proteomics">
        <title>Immunoaffinity enrichment and mass spectrometry analysis of protein methylation.</title>
        <authorList>
            <person name="Guo A."/>
            <person name="Gu H."/>
            <person name="Zhou J."/>
            <person name="Mulhern D."/>
            <person name="Wang Y."/>
            <person name="Lee K.A."/>
            <person name="Yang V."/>
            <person name="Aguiar M."/>
            <person name="Kornhauser J."/>
            <person name="Jia X."/>
            <person name="Ren J."/>
            <person name="Beausoleil S.A."/>
            <person name="Silva J.C."/>
            <person name="Vemulapalli V."/>
            <person name="Bedford M.T."/>
            <person name="Comb M.J."/>
        </authorList>
    </citation>
    <scope>METHYLATION [LARGE SCALE ANALYSIS] AT ARG-380</scope>
    <scope>IDENTIFICATION BY MASS SPECTROMETRY [LARGE SCALE ANALYSIS]</scope>
    <source>
        <tissue>Brain</tissue>
    </source>
</reference>
<feature type="initiator methionine" description="Removed" evidence="2">
    <location>
        <position position="1"/>
    </location>
</feature>
<feature type="chain" id="PRO_0000415808" description="Coiled-coil domain-containing protein 6">
    <location>
        <begin position="2"/>
        <end position="469"/>
    </location>
</feature>
<feature type="repeat" description="1">
    <location>
        <begin position="99"/>
        <end position="127"/>
    </location>
</feature>
<feature type="repeat" description="2">
    <location>
        <begin position="128"/>
        <end position="156"/>
    </location>
</feature>
<feature type="repeat" description="3">
    <location>
        <begin position="157"/>
        <end position="185"/>
    </location>
</feature>
<feature type="repeat" description="4; approximate">
    <location>
        <begin position="186"/>
        <end position="199"/>
    </location>
</feature>
<feature type="repeat" description="5">
    <location>
        <begin position="200"/>
        <end position="228"/>
    </location>
</feature>
<feature type="region of interest" description="Disordered" evidence="4">
    <location>
        <begin position="1"/>
        <end position="37"/>
    </location>
</feature>
<feature type="region of interest" description="5 X 29 AA tandem repeats">
    <location>
        <begin position="99"/>
        <end position="228"/>
    </location>
</feature>
<feature type="region of interest" description="Disordered" evidence="4">
    <location>
        <begin position="335"/>
        <end position="362"/>
    </location>
</feature>
<feature type="region of interest" description="Disordered" evidence="4">
    <location>
        <begin position="394"/>
        <end position="469"/>
    </location>
</feature>
<feature type="coiled-coil region" evidence="3">
    <location>
        <begin position="47"/>
        <end position="320"/>
    </location>
</feature>
<feature type="short sequence motif" description="SH3-binding" evidence="3">
    <location>
        <begin position="435"/>
        <end position="444"/>
    </location>
</feature>
<feature type="compositionally biased region" description="Acidic residues" evidence="4">
    <location>
        <begin position="1"/>
        <end position="10"/>
    </location>
</feature>
<feature type="compositionally biased region" description="Low complexity" evidence="4">
    <location>
        <begin position="344"/>
        <end position="361"/>
    </location>
</feature>
<feature type="compositionally biased region" description="Pro residues" evidence="4">
    <location>
        <begin position="419"/>
        <end position="444"/>
    </location>
</feature>
<feature type="compositionally biased region" description="Low complexity" evidence="4">
    <location>
        <begin position="460"/>
        <end position="469"/>
    </location>
</feature>
<feature type="modified residue" description="N-acetylalanine" evidence="2">
    <location>
        <position position="2"/>
    </location>
</feature>
<feature type="modified residue" description="Phosphoserine" evidence="6">
    <location>
        <position position="45"/>
    </location>
</feature>
<feature type="modified residue" description="Phosphoserine" evidence="5 6">
    <location>
        <position position="233"/>
    </location>
</feature>
<feature type="modified residue" description="Phosphoserine" evidence="5 6">
    <location>
        <position position="237"/>
    </location>
</feature>
<feature type="modified residue" description="Phosphoserine" evidence="2">
    <location>
        <position position="242"/>
    </location>
</feature>
<feature type="modified residue" description="Phosphoserine" evidence="2">
    <location>
        <position position="247"/>
    </location>
</feature>
<feature type="modified residue" description="Phosphoserine" evidence="2">
    <location>
        <position position="277"/>
    </location>
</feature>
<feature type="modified residue" description="Phosphoserine" evidence="6">
    <location>
        <position position="316"/>
    </location>
</feature>
<feature type="modified residue" description="Phosphothreonine" evidence="2">
    <location>
        <position position="342"/>
    </location>
</feature>
<feature type="modified residue" description="Phosphoserine" evidence="2">
    <location>
        <position position="356"/>
    </location>
</feature>
<feature type="modified residue" description="Phosphoserine" evidence="2">
    <location>
        <position position="360"/>
    </location>
</feature>
<feature type="modified residue" description="Omega-N-methylarginine" evidence="7">
    <location>
        <position position="380"/>
    </location>
</feature>
<feature type="modified residue" description="Phosphoserine" evidence="2">
    <location>
        <position position="388"/>
    </location>
</feature>
<feature type="modified residue" description="Phosphoserine" evidence="2">
    <location>
        <position position="406"/>
    </location>
</feature>
<protein>
    <recommendedName>
        <fullName>Coiled-coil domain-containing protein 6</fullName>
    </recommendedName>
</protein>
<name>CCDC6_MOUSE</name>
<sequence>MADSASESDTDAAGGGPAAMQSSCSATSGGSGGGGGGKSGGIVISPFRLEELTNRLASLQQENKVLKIELETYKLKCKALQEENRDLRKASVTIQARAEQEEEFISNTLFKKIQALQKEKETLAVNYEKEEEFLTNELSRKLMQLQHEKAELEQHLEQEQEFQVNKLMKKIKKLENDTISKQLTLEQLRREKIDLENTLEQEQEALVNRLWKRMDKLEAEKRILQEKLDQPVSAPPSPRDISMEIDSPENMMRHIRFLKNEVERLKKQLRAAQLQHSEKMAQYLEEERHMREENLRLQRKLQREMERREALCRQLSESESSLEMDDERYFNEMSAQGLRPRTVSSPIPYTPSPSSSRPISPGLSYASHTVGFTPPTSLTRAGMSYYNSPGLHVQHMGASHGITRPSPRRSSSPDKFKRPTPPPSPNTQSPVQPPPPPPPPPMQPAVPSAAPTQPAPTQPQHPVHPSSQP</sequence>
<organism>
    <name type="scientific">Mus musculus</name>
    <name type="common">Mouse</name>
    <dbReference type="NCBI Taxonomy" id="10090"/>
    <lineage>
        <taxon>Eukaryota</taxon>
        <taxon>Metazoa</taxon>
        <taxon>Chordata</taxon>
        <taxon>Craniata</taxon>
        <taxon>Vertebrata</taxon>
        <taxon>Euteleostomi</taxon>
        <taxon>Mammalia</taxon>
        <taxon>Eutheria</taxon>
        <taxon>Euarchontoglires</taxon>
        <taxon>Glires</taxon>
        <taxon>Rodentia</taxon>
        <taxon>Myomorpha</taxon>
        <taxon>Muroidea</taxon>
        <taxon>Muridae</taxon>
        <taxon>Murinae</taxon>
        <taxon>Mus</taxon>
        <taxon>Mus</taxon>
    </lineage>
</organism>
<keyword id="KW-0007">Acetylation</keyword>
<keyword id="KW-0160">Chromosomal rearrangement</keyword>
<keyword id="KW-0175">Coiled coil</keyword>
<keyword id="KW-0963">Cytoplasm</keyword>
<keyword id="KW-0206">Cytoskeleton</keyword>
<keyword id="KW-0488">Methylation</keyword>
<keyword id="KW-0597">Phosphoprotein</keyword>
<keyword id="KW-1185">Reference proteome</keyword>
<keyword id="KW-0677">Repeat</keyword>
<keyword id="KW-0729">SH3-binding</keyword>
<proteinExistence type="evidence at protein level"/>
<accession>D3YZP9</accession>
<comment type="subcellular location">
    <subcellularLocation>
        <location evidence="1">Cytoplasm</location>
    </subcellularLocation>
    <subcellularLocation>
        <location evidence="1">Cytoplasm</location>
        <location evidence="1">Cytoskeleton</location>
    </subcellularLocation>
    <text evidence="1">May be a cytoskeletal protein.</text>
</comment>
<comment type="domain">
    <text evidence="1">The protein has mostly an alpha helical conformation similar to myosin heavy-chain tail that might adopt a coiled-coil conformation.</text>
</comment>
<dbReference type="EMBL" id="AC132435">
    <property type="status" value="NOT_ANNOTATED_CDS"/>
    <property type="molecule type" value="Genomic_DNA"/>
</dbReference>
<dbReference type="EMBL" id="CH466553">
    <property type="protein sequence ID" value="EDL31982.1"/>
    <property type="molecule type" value="Genomic_DNA"/>
</dbReference>
<dbReference type="CCDS" id="CCDS48591.1"/>
<dbReference type="RefSeq" id="NP_001104591.1">
    <property type="nucleotide sequence ID" value="NM_001111121.2"/>
</dbReference>
<dbReference type="SMR" id="D3YZP9"/>
<dbReference type="BioGRID" id="218173">
    <property type="interactions" value="10"/>
</dbReference>
<dbReference type="FunCoup" id="D3YZP9">
    <property type="interactions" value="2491"/>
</dbReference>
<dbReference type="IntAct" id="D3YZP9">
    <property type="interactions" value="1"/>
</dbReference>
<dbReference type="STRING" id="10090.ENSMUSP00000123374"/>
<dbReference type="GlyGen" id="D3YZP9">
    <property type="glycosylation" value="3 sites, 1 N-linked glycan (1 site), 1 O-linked glycan (1 site)"/>
</dbReference>
<dbReference type="iPTMnet" id="D3YZP9"/>
<dbReference type="PhosphoSitePlus" id="D3YZP9"/>
<dbReference type="jPOST" id="D3YZP9"/>
<dbReference type="PaxDb" id="10090-ENSMUSP00000123374"/>
<dbReference type="PeptideAtlas" id="D3YZP9"/>
<dbReference type="ProteomicsDB" id="265369"/>
<dbReference type="Pumba" id="D3YZP9"/>
<dbReference type="Antibodypedia" id="14268">
    <property type="antibodies" value="229 antibodies from 29 providers"/>
</dbReference>
<dbReference type="Ensembl" id="ENSMUST00000147545.8">
    <property type="protein sequence ID" value="ENSMUSP00000123374.2"/>
    <property type="gene ID" value="ENSMUSG00000048701.14"/>
</dbReference>
<dbReference type="GeneID" id="76551"/>
<dbReference type="KEGG" id="mmu:76551"/>
<dbReference type="UCSC" id="uc011xfv.1">
    <property type="organism name" value="mouse"/>
</dbReference>
<dbReference type="AGR" id="MGI:1923801"/>
<dbReference type="CTD" id="8030"/>
<dbReference type="MGI" id="MGI:1923801">
    <property type="gene designation" value="Ccdc6"/>
</dbReference>
<dbReference type="VEuPathDB" id="HostDB:ENSMUSG00000048701"/>
<dbReference type="eggNOG" id="KOG2129">
    <property type="taxonomic scope" value="Eukaryota"/>
</dbReference>
<dbReference type="GeneTree" id="ENSGT00390000013594"/>
<dbReference type="HOGENOM" id="CLU_033433_2_0_1"/>
<dbReference type="InParanoid" id="D3YZP9"/>
<dbReference type="OMA" id="DTQQEHN"/>
<dbReference type="OrthoDB" id="78858at2759"/>
<dbReference type="PhylomeDB" id="D3YZP9"/>
<dbReference type="TreeFam" id="TF321211"/>
<dbReference type="BioGRID-ORCS" id="76551">
    <property type="hits" value="9 hits in 80 CRISPR screens"/>
</dbReference>
<dbReference type="ChiTaRS" id="Ccdc6">
    <property type="organism name" value="mouse"/>
</dbReference>
<dbReference type="PRO" id="PR:D3YZP9"/>
<dbReference type="Proteomes" id="UP000000589">
    <property type="component" value="Chromosome 10"/>
</dbReference>
<dbReference type="RNAct" id="D3YZP9">
    <property type="molecule type" value="protein"/>
</dbReference>
<dbReference type="Bgee" id="ENSMUSG00000048701">
    <property type="expression patterns" value="Expressed in animal zygote and 259 other cell types or tissues"/>
</dbReference>
<dbReference type="ExpressionAtlas" id="D3YZP9">
    <property type="expression patterns" value="baseline and differential"/>
</dbReference>
<dbReference type="GO" id="GO:0005856">
    <property type="term" value="C:cytoskeleton"/>
    <property type="evidence" value="ECO:0007669"/>
    <property type="project" value="UniProtKB-SubCell"/>
</dbReference>
<dbReference type="GO" id="GO:0005829">
    <property type="term" value="C:cytosol"/>
    <property type="evidence" value="ECO:0007669"/>
    <property type="project" value="Ensembl"/>
</dbReference>
<dbReference type="GO" id="GO:0042802">
    <property type="term" value="F:identical protein binding"/>
    <property type="evidence" value="ECO:0007669"/>
    <property type="project" value="Ensembl"/>
</dbReference>
<dbReference type="GO" id="GO:0017124">
    <property type="term" value="F:SH3 domain binding"/>
    <property type="evidence" value="ECO:0007669"/>
    <property type="project" value="UniProtKB-KW"/>
</dbReference>
<dbReference type="InterPro" id="IPR019152">
    <property type="entry name" value="DUF2046"/>
</dbReference>
<dbReference type="PANTHER" id="PTHR15276:SF0">
    <property type="entry name" value="COILED-COIL DOMAIN-CONTAINING PROTEIN 6"/>
    <property type="match status" value="1"/>
</dbReference>
<dbReference type="PANTHER" id="PTHR15276">
    <property type="entry name" value="H4 D10S170 PROTEIN-RELATED"/>
    <property type="match status" value="1"/>
</dbReference>
<dbReference type="Pfam" id="PF09755">
    <property type="entry name" value="DUF2046"/>
    <property type="match status" value="1"/>
</dbReference>
<evidence type="ECO:0000250" key="1"/>
<evidence type="ECO:0000250" key="2">
    <source>
        <dbReference type="UniProtKB" id="Q16204"/>
    </source>
</evidence>
<evidence type="ECO:0000255" key="3"/>
<evidence type="ECO:0000256" key="4">
    <source>
        <dbReference type="SAM" id="MobiDB-lite"/>
    </source>
</evidence>
<evidence type="ECO:0007744" key="5">
    <source>
    </source>
</evidence>
<evidence type="ECO:0007744" key="6">
    <source>
    </source>
</evidence>
<evidence type="ECO:0007744" key="7">
    <source>
    </source>
</evidence>